<evidence type="ECO:0000255" key="1">
    <source>
        <dbReference type="HAMAP-Rule" id="MF_04002"/>
    </source>
</evidence>
<evidence type="ECO:0000256" key="2">
    <source>
        <dbReference type="SAM" id="MobiDB-lite"/>
    </source>
</evidence>
<keyword id="KW-0167">Capsid protein</keyword>
<keyword id="KW-1015">Disulfide bond</keyword>
<keyword id="KW-1048">Host nucleus</keyword>
<keyword id="KW-0945">Host-virus interaction</keyword>
<keyword id="KW-0426">Late protein</keyword>
<keyword id="KW-1185">Reference proteome</keyword>
<keyword id="KW-1145">T=7 icosahedral capsid protein</keyword>
<keyword id="KW-1161">Viral attachment to host cell</keyword>
<keyword id="KW-1162">Viral penetration into host cytoplasm</keyword>
<keyword id="KW-0946">Virion</keyword>
<keyword id="KW-1164">Virus endocytosis by host</keyword>
<keyword id="KW-1160">Virus entry into host cell</keyword>
<organism>
    <name type="scientific">Human papillomavirus type 26</name>
    <dbReference type="NCBI Taxonomy" id="333762"/>
    <lineage>
        <taxon>Viruses</taxon>
        <taxon>Monodnaviria</taxon>
        <taxon>Shotokuvirae</taxon>
        <taxon>Cossaviricota</taxon>
        <taxon>Papovaviricetes</taxon>
        <taxon>Zurhausenvirales</taxon>
        <taxon>Papillomaviridae</taxon>
        <taxon>Firstpapillomavirinae</taxon>
        <taxon>Alphapapillomavirus</taxon>
        <taxon>Alphapapillomavirus 5</taxon>
    </lineage>
</organism>
<accession>P36735</accession>
<gene>
    <name evidence="1" type="primary">L1</name>
</gene>
<organismHost>
    <name type="scientific">Homo sapiens</name>
    <name type="common">Human</name>
    <dbReference type="NCBI Taxonomy" id="9606"/>
</organismHost>
<reference key="1">
    <citation type="journal article" date="1994" name="Curr. Top. Microbiol. Immunol.">
        <title>Primer-directed sequencing of human papillomavirus types.</title>
        <authorList>
            <person name="Delius H."/>
            <person name="Hofmann B."/>
        </authorList>
    </citation>
    <scope>NUCLEOTIDE SEQUENCE [GENOMIC DNA]</scope>
</reference>
<feature type="chain" id="PRO_0000133510" description="Major capsid protein L1">
    <location>
        <begin position="1"/>
        <end position="503"/>
    </location>
</feature>
<feature type="region of interest" description="Disordered" evidence="2">
    <location>
        <begin position="476"/>
        <end position="503"/>
    </location>
</feature>
<feature type="compositionally biased region" description="Low complexity" evidence="2">
    <location>
        <begin position="484"/>
        <end position="493"/>
    </location>
</feature>
<feature type="compositionally biased region" description="Basic residues" evidence="2">
    <location>
        <begin position="494"/>
        <end position="503"/>
    </location>
</feature>
<feature type="disulfide bond" description="Interchain (with C-429)" evidence="1">
    <location>
        <position position="174"/>
    </location>
</feature>
<feature type="disulfide bond" description="Interchain (with C-174)" evidence="1">
    <location>
        <position position="429"/>
    </location>
</feature>
<dbReference type="EMBL" id="X74472">
    <property type="protein sequence ID" value="CAA52535.1"/>
    <property type="molecule type" value="Genomic_DNA"/>
</dbReference>
<dbReference type="PIR" id="S36549">
    <property type="entry name" value="S36549"/>
</dbReference>
<dbReference type="RefSeq" id="NP_041787.1">
    <property type="nucleotide sequence ID" value="NC_001583.1"/>
</dbReference>
<dbReference type="SMR" id="P36735"/>
<dbReference type="GeneID" id="1496948"/>
<dbReference type="KEGG" id="vg:1496948"/>
<dbReference type="OrthoDB" id="5037at10239"/>
<dbReference type="Proteomes" id="UP000009113">
    <property type="component" value="Genome"/>
</dbReference>
<dbReference type="GO" id="GO:0042025">
    <property type="term" value="C:host cell nucleus"/>
    <property type="evidence" value="ECO:0007669"/>
    <property type="project" value="UniProtKB-SubCell"/>
</dbReference>
<dbReference type="GO" id="GO:0039620">
    <property type="term" value="C:T=7 icosahedral viral capsid"/>
    <property type="evidence" value="ECO:0007669"/>
    <property type="project" value="UniProtKB-UniRule"/>
</dbReference>
<dbReference type="GO" id="GO:0005198">
    <property type="term" value="F:structural molecule activity"/>
    <property type="evidence" value="ECO:0007669"/>
    <property type="project" value="UniProtKB-UniRule"/>
</dbReference>
<dbReference type="GO" id="GO:0075509">
    <property type="term" value="P:endocytosis involved in viral entry into host cell"/>
    <property type="evidence" value="ECO:0007669"/>
    <property type="project" value="UniProtKB-KW"/>
</dbReference>
<dbReference type="GO" id="GO:0019062">
    <property type="term" value="P:virion attachment to host cell"/>
    <property type="evidence" value="ECO:0007669"/>
    <property type="project" value="UniProtKB-UniRule"/>
</dbReference>
<dbReference type="Gene3D" id="2.60.175.20">
    <property type="entry name" value="Major capsid L1 (late) superfamily, Papillomavirus"/>
    <property type="match status" value="2"/>
</dbReference>
<dbReference type="HAMAP" id="MF_04002">
    <property type="entry name" value="PPV_L1"/>
    <property type="match status" value="1"/>
</dbReference>
<dbReference type="InterPro" id="IPR002210">
    <property type="entry name" value="Capsid_L1_Papillomavir"/>
</dbReference>
<dbReference type="InterPro" id="IPR036973">
    <property type="entry name" value="Capsid_L1_sf_Papillomavir"/>
</dbReference>
<dbReference type="InterPro" id="IPR011222">
    <property type="entry name" value="dsDNA_vir_gr_I_capsid"/>
</dbReference>
<dbReference type="Pfam" id="PF00500">
    <property type="entry name" value="Late_protein_L1"/>
    <property type="match status" value="1"/>
</dbReference>
<dbReference type="PRINTS" id="PR00865">
    <property type="entry name" value="HPVCAPSIDL1"/>
</dbReference>
<dbReference type="SUPFAM" id="SSF88648">
    <property type="entry name" value="Group I dsDNA viruses"/>
    <property type="match status" value="1"/>
</dbReference>
<comment type="function">
    <text evidence="1">Forms an icosahedral capsid with a T=7 symmetry and a 50 nm diameter. The capsid is composed of 72 pentamers linked to each other by disulfide bonds and associated with L2 proteins. Binds to heparan sulfate proteoglycans on cell surface of basal layer keratinocytes to provide initial virion attachment. This binding mediates a conformational change in the virus capsid that facilitates efficient infection. The virion enters the host cell via endocytosis. During virus trafficking, L1 protein dissociates from the viral DNA and the genomic DNA is released to the host nucleus. The virion assembly takes place within the cell nucleus. Encapsulates the genomic DNA together with protein L2.</text>
</comment>
<comment type="subunit">
    <text evidence="1">Self-assembles into homopentamers. The capsid has an icosahedral symmetry and consists of 72 capsomers, with each capsomer being a pentamer of L1. Interacts with the minor capsid protein L2; this interaction is necessary for viral genome encapsidation. Interacts with protein E2; this interaction enhances E2-dependent replication and transcription activation.</text>
</comment>
<comment type="subcellular location">
    <subcellularLocation>
        <location evidence="1">Virion</location>
    </subcellularLocation>
    <subcellularLocation>
        <location evidence="1">Host nucleus</location>
    </subcellularLocation>
</comment>
<comment type="similarity">
    <text evidence="1">Belongs to the papillomaviridae L1 protein family.</text>
</comment>
<name>VL1_HPV26</name>
<protein>
    <recommendedName>
        <fullName evidence="1">Major capsid protein L1</fullName>
    </recommendedName>
</protein>
<proteinExistence type="inferred from homology"/>
<sequence length="503" mass="56328">MALWRTSDSKVYLPPTPVSRVVNTDEYVTRTGIYYYAGSSRLLTLGHPYFSIPKTGQKAEIPKVSAYQYRVFRVHLPDPNKFGLPDPQLYNPDTERLVWACVGVEVGRGQPLGIGLSGHPLFNKLDDTENSHLATVNADTDNRDNVSVDNKQTQLCIIGCTPPLGEHWGIGTICKNTQTQRGDCPPLELISSIIEDGDMIDTGFGAMDFTALQATKSDVPIDISQSTCKYPDYLKMSADTYGNSMFFFLRREQLFARHFYNKAGAVGDAIPTTLYIKGAESGREPPTSSIYSATPSGSMVTSDAQLFNKPYWLQRAQGHNNGICWGNQLFVTCVDTTRSTNLTISTLSAASASTPFKPSDYKQFIRHGEEYELQFIFQLCKITLTTDVMAYIHLMNASILEDWNFGLTLPPTASLEDAYRFIKNSATTCQRNAPPVPKEDPFQKFKFWDVDLKEKFSIDLDQFPLGRKFMLQAGIQRRPKLGTKRPLSSTSSSTKRKKRKLTK</sequence>